<accession>Q58073</accession>
<gene>
    <name type="ordered locus">MJ0659</name>
</gene>
<dbReference type="EMBL" id="L77117">
    <property type="protein sequence ID" value="AAB98658.1"/>
    <property type="molecule type" value="Genomic_DNA"/>
</dbReference>
<dbReference type="PIR" id="C64382">
    <property type="entry name" value="C64382"/>
</dbReference>
<dbReference type="RefSeq" id="WP_010870164.1">
    <property type="nucleotide sequence ID" value="NC_000909.1"/>
</dbReference>
<dbReference type="SMR" id="Q58073"/>
<dbReference type="PaxDb" id="243232-MJ_0659"/>
<dbReference type="EnsemblBacteria" id="AAB98658">
    <property type="protein sequence ID" value="AAB98658"/>
    <property type="gene ID" value="MJ_0659"/>
</dbReference>
<dbReference type="GeneID" id="1451525"/>
<dbReference type="KEGG" id="mja:MJ_0659"/>
<dbReference type="eggNOG" id="arCOG09670">
    <property type="taxonomic scope" value="Archaea"/>
</dbReference>
<dbReference type="HOGENOM" id="CLU_1850645_0_0_2"/>
<dbReference type="InParanoid" id="Q58073"/>
<dbReference type="OrthoDB" id="65786at2157"/>
<dbReference type="Proteomes" id="UP000000805">
    <property type="component" value="Chromosome"/>
</dbReference>
<dbReference type="Gene3D" id="1.25.40.10">
    <property type="entry name" value="Tetratricopeptide repeat domain"/>
    <property type="match status" value="1"/>
</dbReference>
<dbReference type="InterPro" id="IPR011990">
    <property type="entry name" value="TPR-like_helical_dom_sf"/>
</dbReference>
<dbReference type="SUPFAM" id="SSF48452">
    <property type="entry name" value="TPR-like"/>
    <property type="match status" value="1"/>
</dbReference>
<organism>
    <name type="scientific">Methanocaldococcus jannaschii (strain ATCC 43067 / DSM 2661 / JAL-1 / JCM 10045 / NBRC 100440)</name>
    <name type="common">Methanococcus jannaschii</name>
    <dbReference type="NCBI Taxonomy" id="243232"/>
    <lineage>
        <taxon>Archaea</taxon>
        <taxon>Methanobacteriati</taxon>
        <taxon>Methanobacteriota</taxon>
        <taxon>Methanomada group</taxon>
        <taxon>Methanococci</taxon>
        <taxon>Methanococcales</taxon>
        <taxon>Methanocaldococcaceae</taxon>
        <taxon>Methanocaldococcus</taxon>
    </lineage>
</organism>
<reference key="1">
    <citation type="journal article" date="1996" name="Science">
        <title>Complete genome sequence of the methanogenic archaeon, Methanococcus jannaschii.</title>
        <authorList>
            <person name="Bult C.J."/>
            <person name="White O."/>
            <person name="Olsen G.J."/>
            <person name="Zhou L."/>
            <person name="Fleischmann R.D."/>
            <person name="Sutton G.G."/>
            <person name="Blake J.A."/>
            <person name="FitzGerald L.M."/>
            <person name="Clayton R.A."/>
            <person name="Gocayne J.D."/>
            <person name="Kerlavage A.R."/>
            <person name="Dougherty B.A."/>
            <person name="Tomb J.-F."/>
            <person name="Adams M.D."/>
            <person name="Reich C.I."/>
            <person name="Overbeek R."/>
            <person name="Kirkness E.F."/>
            <person name="Weinstock K.G."/>
            <person name="Merrick J.M."/>
            <person name="Glodek A."/>
            <person name="Scott J.L."/>
            <person name="Geoghagen N.S.M."/>
            <person name="Weidman J.F."/>
            <person name="Fuhrmann J.L."/>
            <person name="Nguyen D."/>
            <person name="Utterback T.R."/>
            <person name="Kelley J.M."/>
            <person name="Peterson J.D."/>
            <person name="Sadow P.W."/>
            <person name="Hanna M.C."/>
            <person name="Cotton M.D."/>
            <person name="Roberts K.M."/>
            <person name="Hurst M.A."/>
            <person name="Kaine B.P."/>
            <person name="Borodovsky M."/>
            <person name="Klenk H.-P."/>
            <person name="Fraser C.M."/>
            <person name="Smith H.O."/>
            <person name="Woese C.R."/>
            <person name="Venter J.C."/>
        </authorList>
    </citation>
    <scope>NUCLEOTIDE SEQUENCE [LARGE SCALE GENOMIC DNA]</scope>
    <source>
        <strain>ATCC 43067 / DSM 2661 / JAL-1 / JCM 10045 / NBRC 100440</strain>
    </source>
</reference>
<sequence length="138" mass="15470">MVSEIIKLIEEGKIEEVLKKVEEIKGDAQLEIIALTLIEKGYCDEAVKVAEKISSFGLKDEVLRKVAIAYIENGEIDKAMALVEKIKTETDLEKIAMKLIEIKKYREALKVAEKIKSRAIKEGILMAIINALLDELGK</sequence>
<keyword id="KW-1185">Reference proteome</keyword>
<feature type="chain" id="PRO_0000106976" description="Uncharacterized protein MJ0659">
    <location>
        <begin position="1"/>
        <end position="138"/>
    </location>
</feature>
<proteinExistence type="predicted"/>
<name>Y659_METJA</name>
<protein>
    <recommendedName>
        <fullName>Uncharacterized protein MJ0659</fullName>
    </recommendedName>
</protein>